<proteinExistence type="evidence at transcript level"/>
<protein>
    <recommendedName>
        <fullName>Acidic leucine-rich nuclear phosphoprotein 32-related protein 1</fullName>
    </recommendedName>
    <alternativeName>
        <fullName>ANP32/acidic nuclear phosphoprotein-like protein 1</fullName>
    </alternativeName>
</protein>
<dbReference type="EMBL" id="AP006458">
    <property type="protein sequence ID" value="BAC84847.1"/>
    <property type="molecule type" value="Genomic_DNA"/>
</dbReference>
<dbReference type="EMBL" id="AP008213">
    <property type="protein sequence ID" value="BAF22152.1"/>
    <property type="status" value="ALT_SEQ"/>
    <property type="molecule type" value="Genomic_DNA"/>
</dbReference>
<dbReference type="EMBL" id="AP014963">
    <property type="protein sequence ID" value="BAT02582.1"/>
    <property type="molecule type" value="Genomic_DNA"/>
</dbReference>
<dbReference type="EMBL" id="CM000144">
    <property type="protein sequence ID" value="EAZ40604.1"/>
    <property type="molecule type" value="Genomic_DNA"/>
</dbReference>
<dbReference type="EMBL" id="AK069010">
    <property type="status" value="NOT_ANNOTATED_CDS"/>
    <property type="molecule type" value="mRNA"/>
</dbReference>
<dbReference type="RefSeq" id="XP_015646557.1">
    <property type="nucleotide sequence ID" value="XM_015791071.1"/>
</dbReference>
<dbReference type="SMR" id="Q6YSF3"/>
<dbReference type="FunCoup" id="Q6YSF3">
    <property type="interactions" value="574"/>
</dbReference>
<dbReference type="STRING" id="39947.Q6YSF3"/>
<dbReference type="PaxDb" id="39947-Q6YSF3"/>
<dbReference type="EnsemblPlants" id="Os07t0607800-01">
    <property type="protein sequence ID" value="Os07t0607800-01"/>
    <property type="gene ID" value="Os07g0607800"/>
</dbReference>
<dbReference type="Gramene" id="Os07t0607800-01">
    <property type="protein sequence ID" value="Os07t0607800-01"/>
    <property type="gene ID" value="Os07g0607800"/>
</dbReference>
<dbReference type="KEGG" id="dosa:Os07g0607800"/>
<dbReference type="eggNOG" id="KOG1808">
    <property type="taxonomic scope" value="Eukaryota"/>
</dbReference>
<dbReference type="eggNOG" id="KOG2739">
    <property type="taxonomic scope" value="Eukaryota"/>
</dbReference>
<dbReference type="HOGENOM" id="CLU_022686_0_0_1"/>
<dbReference type="InParanoid" id="Q6YSF3"/>
<dbReference type="OMA" id="DRPFRMT"/>
<dbReference type="OrthoDB" id="2160613at2759"/>
<dbReference type="Proteomes" id="UP000000763">
    <property type="component" value="Chromosome 7"/>
</dbReference>
<dbReference type="Proteomes" id="UP000007752">
    <property type="component" value="Chromosome 7"/>
</dbReference>
<dbReference type="Proteomes" id="UP000059680">
    <property type="component" value="Chromosome 7"/>
</dbReference>
<dbReference type="ExpressionAtlas" id="Q6YSF3">
    <property type="expression patterns" value="baseline and differential"/>
</dbReference>
<dbReference type="GO" id="GO:0005634">
    <property type="term" value="C:nucleus"/>
    <property type="evidence" value="ECO:0000318"/>
    <property type="project" value="GO_Central"/>
</dbReference>
<dbReference type="GO" id="GO:0042393">
    <property type="term" value="F:histone binding"/>
    <property type="evidence" value="ECO:0000318"/>
    <property type="project" value="GO_Central"/>
</dbReference>
<dbReference type="FunFam" id="3.80.10.10:FF:000131">
    <property type="entry name" value="acidic leucine-rich nuclear phosphoprotein 32-related protein-like"/>
    <property type="match status" value="1"/>
</dbReference>
<dbReference type="Gene3D" id="3.80.10.10">
    <property type="entry name" value="Ribonuclease Inhibitor"/>
    <property type="match status" value="1"/>
</dbReference>
<dbReference type="InterPro" id="IPR045081">
    <property type="entry name" value="AN32"/>
</dbReference>
<dbReference type="InterPro" id="IPR001611">
    <property type="entry name" value="Leu-rich_rpt"/>
</dbReference>
<dbReference type="InterPro" id="IPR032675">
    <property type="entry name" value="LRR_dom_sf"/>
</dbReference>
<dbReference type="PANTHER" id="PTHR11375">
    <property type="entry name" value="ACIDIC LEUCINE-RICH NUCLEAR PHOSPHOPROTEIN 32"/>
    <property type="match status" value="1"/>
</dbReference>
<dbReference type="PANTHER" id="PTHR11375:SF0">
    <property type="entry name" value="ACIDIC LEUCINE-RICH NUCLEAR PHOSPHOPROTEIN 32 FAMILY MEMBER A"/>
    <property type="match status" value="1"/>
</dbReference>
<dbReference type="Pfam" id="PF14580">
    <property type="entry name" value="LRR_9"/>
    <property type="match status" value="1"/>
</dbReference>
<dbReference type="SUPFAM" id="SSF52058">
    <property type="entry name" value="L domain-like"/>
    <property type="match status" value="1"/>
</dbReference>
<dbReference type="PROSITE" id="PS51450">
    <property type="entry name" value="LRR"/>
    <property type="match status" value="3"/>
</dbReference>
<name>AN321_ORYSJ</name>
<evidence type="ECO:0000256" key="1">
    <source>
        <dbReference type="SAM" id="MobiDB-lite"/>
    </source>
</evidence>
<evidence type="ECO:0000305" key="2"/>
<evidence type="ECO:0000312" key="3">
    <source>
        <dbReference type="EMBL" id="EAZ40604.1"/>
    </source>
</evidence>
<sequence>MDEAWERAVEAALQAAGEGSSSPARSLTLDGAVKCLHGRLPAAEILERYQSLEHLSIAGVGVASLAGFPRLRNLTRLTLSDNRIAGGLDHLVAAGLASLRDLDLSNNRIQDVGDLSPLANLRLVSLDLYECPVTRVKDYRSKVFGMIRTLKYLDKMDADENERPESDDDDDDGDGDGDGEEEEDDDDDEDEDPGSGEVANGGVSHPRGGVASHPVEVNGVIDVDEDESDADEVVPNGGDEHHANGFRVAAVGDEDEYVEEEDDDDEEDYEEEDDLGEEIDEDGDDEDAVVEVHDVPSSSDEEEDGIEEEDEEEDEDEEEVEDDGEEAEPESSGRVALAVGDVGEEIDGHEHGEGEDEDENGEIGEEDEERLEDDRVYEEGNDDDEEDVDDEDEDTEYLVQPIAQPQAMAVGNDFDAAEADDADEDRDEVDDDDDGGTDLPSSSQGAKRKRDDDPSGSGDDDEDDDGVEDLRPFKHH</sequence>
<keyword id="KW-0433">Leucine-rich repeat</keyword>
<keyword id="KW-1185">Reference proteome</keyword>
<keyword id="KW-0677">Repeat</keyword>
<comment type="similarity">
    <text evidence="2">Belongs to the ANP32 family.</text>
</comment>
<comment type="sequence caution" evidence="2">
    <conflict type="erroneous gene model prediction">
        <sequence resource="EMBL-CDS" id="BAF22152"/>
    </conflict>
</comment>
<organism>
    <name type="scientific">Oryza sativa subsp. japonica</name>
    <name type="common">Rice</name>
    <dbReference type="NCBI Taxonomy" id="39947"/>
    <lineage>
        <taxon>Eukaryota</taxon>
        <taxon>Viridiplantae</taxon>
        <taxon>Streptophyta</taxon>
        <taxon>Embryophyta</taxon>
        <taxon>Tracheophyta</taxon>
        <taxon>Spermatophyta</taxon>
        <taxon>Magnoliopsida</taxon>
        <taxon>Liliopsida</taxon>
        <taxon>Poales</taxon>
        <taxon>Poaceae</taxon>
        <taxon>BOP clade</taxon>
        <taxon>Oryzoideae</taxon>
        <taxon>Oryzeae</taxon>
        <taxon>Oryzinae</taxon>
        <taxon>Oryza</taxon>
        <taxon>Oryza sativa</taxon>
    </lineage>
</organism>
<accession>Q6YSF3</accession>
<accession>A3BM15</accession>
<accession>Q0D4S1</accession>
<feature type="chain" id="PRO_0000240197" description="Acidic leucine-rich nuclear phosphoprotein 32-related protein 1">
    <location>
        <begin position="1"/>
        <end position="476"/>
    </location>
</feature>
<feature type="repeat" description="LRR 1">
    <location>
        <begin position="51"/>
        <end position="72"/>
    </location>
</feature>
<feature type="repeat" description="LRR 2">
    <location>
        <begin position="73"/>
        <end position="92"/>
    </location>
</feature>
<feature type="repeat" description="LRR 3">
    <location>
        <begin position="98"/>
        <end position="119"/>
    </location>
</feature>
<feature type="domain" description="LRRCT">
    <location>
        <begin position="131"/>
        <end position="169"/>
    </location>
</feature>
<feature type="region of interest" description="Disordered" evidence="1">
    <location>
        <begin position="157"/>
        <end position="476"/>
    </location>
</feature>
<feature type="compositionally biased region" description="Acidic residues" evidence="1">
    <location>
        <begin position="165"/>
        <end position="194"/>
    </location>
</feature>
<feature type="compositionally biased region" description="Acidic residues" evidence="1">
    <location>
        <begin position="222"/>
        <end position="232"/>
    </location>
</feature>
<feature type="compositionally biased region" description="Acidic residues" evidence="1">
    <location>
        <begin position="252"/>
        <end position="289"/>
    </location>
</feature>
<feature type="compositionally biased region" description="Acidic residues" evidence="1">
    <location>
        <begin position="299"/>
        <end position="329"/>
    </location>
</feature>
<feature type="compositionally biased region" description="Acidic residues" evidence="1">
    <location>
        <begin position="353"/>
        <end position="371"/>
    </location>
</feature>
<feature type="compositionally biased region" description="Acidic residues" evidence="1">
    <location>
        <begin position="379"/>
        <end position="396"/>
    </location>
</feature>
<feature type="compositionally biased region" description="Acidic residues" evidence="1">
    <location>
        <begin position="415"/>
        <end position="436"/>
    </location>
</feature>
<feature type="compositionally biased region" description="Acidic residues" evidence="1">
    <location>
        <begin position="458"/>
        <end position="467"/>
    </location>
</feature>
<feature type="sequence conflict" description="In Ref. 5; AK069010." evidence="2" ref="5">
    <original>H</original>
    <variation>L</variation>
    <location>
        <position position="54"/>
    </location>
</feature>
<feature type="sequence conflict" description="In Ref. 5; AK069010." evidence="2" ref="5">
    <original>E</original>
    <variation>G</variation>
    <location>
        <position position="281"/>
    </location>
</feature>
<reference key="1">
    <citation type="journal article" date="2005" name="Nature">
        <title>The map-based sequence of the rice genome.</title>
        <authorList>
            <consortium name="International rice genome sequencing project (IRGSP)"/>
        </authorList>
    </citation>
    <scope>NUCLEOTIDE SEQUENCE [LARGE SCALE GENOMIC DNA]</scope>
    <source>
        <strain>cv. Nipponbare</strain>
    </source>
</reference>
<reference key="2">
    <citation type="journal article" date="2008" name="Nucleic Acids Res.">
        <title>The rice annotation project database (RAP-DB): 2008 update.</title>
        <authorList>
            <consortium name="The rice annotation project (RAP)"/>
        </authorList>
    </citation>
    <scope>GENOME REANNOTATION</scope>
    <source>
        <strain>cv. Nipponbare</strain>
    </source>
</reference>
<reference key="3">
    <citation type="journal article" date="2013" name="Rice">
        <title>Improvement of the Oryza sativa Nipponbare reference genome using next generation sequence and optical map data.</title>
        <authorList>
            <person name="Kawahara Y."/>
            <person name="de la Bastide M."/>
            <person name="Hamilton J.P."/>
            <person name="Kanamori H."/>
            <person name="McCombie W.R."/>
            <person name="Ouyang S."/>
            <person name="Schwartz D.C."/>
            <person name="Tanaka T."/>
            <person name="Wu J."/>
            <person name="Zhou S."/>
            <person name="Childs K.L."/>
            <person name="Davidson R.M."/>
            <person name="Lin H."/>
            <person name="Quesada-Ocampo L."/>
            <person name="Vaillancourt B."/>
            <person name="Sakai H."/>
            <person name="Lee S.S."/>
            <person name="Kim J."/>
            <person name="Numa H."/>
            <person name="Itoh T."/>
            <person name="Buell C.R."/>
            <person name="Matsumoto T."/>
        </authorList>
    </citation>
    <scope>GENOME REANNOTATION</scope>
    <source>
        <strain>cv. Nipponbare</strain>
    </source>
</reference>
<reference key="4">
    <citation type="journal article" date="2005" name="PLoS Biol.">
        <title>The genomes of Oryza sativa: a history of duplications.</title>
        <authorList>
            <person name="Yu J."/>
            <person name="Wang J."/>
            <person name="Lin W."/>
            <person name="Li S."/>
            <person name="Li H."/>
            <person name="Zhou J."/>
            <person name="Ni P."/>
            <person name="Dong W."/>
            <person name="Hu S."/>
            <person name="Zeng C."/>
            <person name="Zhang J."/>
            <person name="Zhang Y."/>
            <person name="Li R."/>
            <person name="Xu Z."/>
            <person name="Li S."/>
            <person name="Li X."/>
            <person name="Zheng H."/>
            <person name="Cong L."/>
            <person name="Lin L."/>
            <person name="Yin J."/>
            <person name="Geng J."/>
            <person name="Li G."/>
            <person name="Shi J."/>
            <person name="Liu J."/>
            <person name="Lv H."/>
            <person name="Li J."/>
            <person name="Wang J."/>
            <person name="Deng Y."/>
            <person name="Ran L."/>
            <person name="Shi X."/>
            <person name="Wang X."/>
            <person name="Wu Q."/>
            <person name="Li C."/>
            <person name="Ren X."/>
            <person name="Wang J."/>
            <person name="Wang X."/>
            <person name="Li D."/>
            <person name="Liu D."/>
            <person name="Zhang X."/>
            <person name="Ji Z."/>
            <person name="Zhao W."/>
            <person name="Sun Y."/>
            <person name="Zhang Z."/>
            <person name="Bao J."/>
            <person name="Han Y."/>
            <person name="Dong L."/>
            <person name="Ji J."/>
            <person name="Chen P."/>
            <person name="Wu S."/>
            <person name="Liu J."/>
            <person name="Xiao Y."/>
            <person name="Bu D."/>
            <person name="Tan J."/>
            <person name="Yang L."/>
            <person name="Ye C."/>
            <person name="Zhang J."/>
            <person name="Xu J."/>
            <person name="Zhou Y."/>
            <person name="Yu Y."/>
            <person name="Zhang B."/>
            <person name="Zhuang S."/>
            <person name="Wei H."/>
            <person name="Liu B."/>
            <person name="Lei M."/>
            <person name="Yu H."/>
            <person name="Li Y."/>
            <person name="Xu H."/>
            <person name="Wei S."/>
            <person name="He X."/>
            <person name="Fang L."/>
            <person name="Zhang Z."/>
            <person name="Zhang Y."/>
            <person name="Huang X."/>
            <person name="Su Z."/>
            <person name="Tong W."/>
            <person name="Li J."/>
            <person name="Tong Z."/>
            <person name="Li S."/>
            <person name="Ye J."/>
            <person name="Wang L."/>
            <person name="Fang L."/>
            <person name="Lei T."/>
            <person name="Chen C.-S."/>
            <person name="Chen H.-C."/>
            <person name="Xu Z."/>
            <person name="Li H."/>
            <person name="Huang H."/>
            <person name="Zhang F."/>
            <person name="Xu H."/>
            <person name="Li N."/>
            <person name="Zhao C."/>
            <person name="Li S."/>
            <person name="Dong L."/>
            <person name="Huang Y."/>
            <person name="Li L."/>
            <person name="Xi Y."/>
            <person name="Qi Q."/>
            <person name="Li W."/>
            <person name="Zhang B."/>
            <person name="Hu W."/>
            <person name="Zhang Y."/>
            <person name="Tian X."/>
            <person name="Jiao Y."/>
            <person name="Liang X."/>
            <person name="Jin J."/>
            <person name="Gao L."/>
            <person name="Zheng W."/>
            <person name="Hao B."/>
            <person name="Liu S.-M."/>
            <person name="Wang W."/>
            <person name="Yuan L."/>
            <person name="Cao M."/>
            <person name="McDermott J."/>
            <person name="Samudrala R."/>
            <person name="Wang J."/>
            <person name="Wong G.K.-S."/>
            <person name="Yang H."/>
        </authorList>
    </citation>
    <scope>NUCLEOTIDE SEQUENCE [LARGE SCALE GENOMIC DNA]</scope>
    <source>
        <strain>cv. Nipponbare</strain>
    </source>
</reference>
<reference key="5">
    <citation type="journal article" date="2003" name="Science">
        <title>Collection, mapping, and annotation of over 28,000 cDNA clones from japonica rice.</title>
        <authorList>
            <consortium name="The rice full-length cDNA consortium"/>
        </authorList>
    </citation>
    <scope>NUCLEOTIDE SEQUENCE [LARGE SCALE MRNA]</scope>
    <source>
        <strain>cv. Nipponbare</strain>
    </source>
</reference>
<reference key="6">
    <citation type="journal article" date="2005" name="Cerebellum">
        <title>The Anp32 family of proteins containing leucine-rich repeats.</title>
        <authorList>
            <person name="Matilla A."/>
            <person name="Radrizzani M."/>
        </authorList>
    </citation>
    <scope>GENE FAMILY</scope>
    <scope>NOMENCLATURE</scope>
</reference>
<gene>
    <name type="ordered locus">Os07g0607800</name>
    <name type="ordered locus">LOC_Os07g41694</name>
    <name evidence="3" type="ORF">OsJ_25065</name>
    <name type="ORF">OSJNBa0072I06.30</name>
</gene>